<gene>
    <name evidence="1" type="primary">smpB</name>
    <name type="ordered locus">AM1_0926</name>
</gene>
<accession>B0BZP2</accession>
<keyword id="KW-0963">Cytoplasm</keyword>
<keyword id="KW-1185">Reference proteome</keyword>
<keyword id="KW-0694">RNA-binding</keyword>
<reference key="1">
    <citation type="journal article" date="2008" name="Proc. Natl. Acad. Sci. U.S.A.">
        <title>Niche adaptation and genome expansion in the chlorophyll d-producing cyanobacterium Acaryochloris marina.</title>
        <authorList>
            <person name="Swingley W.D."/>
            <person name="Chen M."/>
            <person name="Cheung P.C."/>
            <person name="Conrad A.L."/>
            <person name="Dejesa L.C."/>
            <person name="Hao J."/>
            <person name="Honchak B.M."/>
            <person name="Karbach L.E."/>
            <person name="Kurdoglu A."/>
            <person name="Lahiri S."/>
            <person name="Mastrian S.D."/>
            <person name="Miyashita H."/>
            <person name="Page L."/>
            <person name="Ramakrishna P."/>
            <person name="Satoh S."/>
            <person name="Sattley W.M."/>
            <person name="Shimada Y."/>
            <person name="Taylor H.L."/>
            <person name="Tomo T."/>
            <person name="Tsuchiya T."/>
            <person name="Wang Z.T."/>
            <person name="Raymond J."/>
            <person name="Mimuro M."/>
            <person name="Blankenship R.E."/>
            <person name="Touchman J.W."/>
        </authorList>
    </citation>
    <scope>NUCLEOTIDE SEQUENCE [LARGE SCALE GENOMIC DNA]</scope>
    <source>
        <strain>MBIC 11017</strain>
    </source>
</reference>
<sequence>MSESYKVISDNRQARFQYEILEVFEAGLALTGTEVKSIRAGKVNLRDGFAQIRNEEAFLLNVHVSPHTNAGQFFNHDPRRTRKLLMHRQEIRKLIGKTEQKGLTLVPLKLYLQRGWIKVTIGLARGKKLHDKRESIKKRQDKRDMERALKRGAE</sequence>
<feature type="chain" id="PRO_0000331011" description="SsrA-binding protein">
    <location>
        <begin position="1"/>
        <end position="154"/>
    </location>
</feature>
<feature type="region of interest" description="Disordered" evidence="2">
    <location>
        <begin position="132"/>
        <end position="154"/>
    </location>
</feature>
<dbReference type="EMBL" id="CP000828">
    <property type="protein sequence ID" value="ABW25968.1"/>
    <property type="molecule type" value="Genomic_DNA"/>
</dbReference>
<dbReference type="RefSeq" id="WP_012161533.1">
    <property type="nucleotide sequence ID" value="NC_009925.1"/>
</dbReference>
<dbReference type="SMR" id="B0BZP2"/>
<dbReference type="STRING" id="329726.AM1_0926"/>
<dbReference type="KEGG" id="amr:AM1_0926"/>
<dbReference type="eggNOG" id="COG0691">
    <property type="taxonomic scope" value="Bacteria"/>
</dbReference>
<dbReference type="HOGENOM" id="CLU_108953_0_1_3"/>
<dbReference type="OrthoDB" id="9805462at2"/>
<dbReference type="Proteomes" id="UP000000268">
    <property type="component" value="Chromosome"/>
</dbReference>
<dbReference type="GO" id="GO:0005829">
    <property type="term" value="C:cytosol"/>
    <property type="evidence" value="ECO:0007669"/>
    <property type="project" value="TreeGrafter"/>
</dbReference>
<dbReference type="GO" id="GO:0003723">
    <property type="term" value="F:RNA binding"/>
    <property type="evidence" value="ECO:0007669"/>
    <property type="project" value="UniProtKB-UniRule"/>
</dbReference>
<dbReference type="GO" id="GO:0070929">
    <property type="term" value="P:trans-translation"/>
    <property type="evidence" value="ECO:0007669"/>
    <property type="project" value="UniProtKB-UniRule"/>
</dbReference>
<dbReference type="CDD" id="cd09294">
    <property type="entry name" value="SmpB"/>
    <property type="match status" value="1"/>
</dbReference>
<dbReference type="Gene3D" id="2.40.280.10">
    <property type="match status" value="1"/>
</dbReference>
<dbReference type="HAMAP" id="MF_00023">
    <property type="entry name" value="SmpB"/>
    <property type="match status" value="1"/>
</dbReference>
<dbReference type="InterPro" id="IPR023620">
    <property type="entry name" value="SmpB"/>
</dbReference>
<dbReference type="InterPro" id="IPR000037">
    <property type="entry name" value="SsrA-bd_prot"/>
</dbReference>
<dbReference type="InterPro" id="IPR020081">
    <property type="entry name" value="SsrA-bd_prot_CS"/>
</dbReference>
<dbReference type="NCBIfam" id="NF003843">
    <property type="entry name" value="PRK05422.1"/>
    <property type="match status" value="1"/>
</dbReference>
<dbReference type="NCBIfam" id="TIGR00086">
    <property type="entry name" value="smpB"/>
    <property type="match status" value="1"/>
</dbReference>
<dbReference type="PANTHER" id="PTHR30308:SF2">
    <property type="entry name" value="SSRA-BINDING PROTEIN"/>
    <property type="match status" value="1"/>
</dbReference>
<dbReference type="PANTHER" id="PTHR30308">
    <property type="entry name" value="TMRNA-BINDING COMPONENT OF TRANS-TRANSLATION TAGGING COMPLEX"/>
    <property type="match status" value="1"/>
</dbReference>
<dbReference type="Pfam" id="PF01668">
    <property type="entry name" value="SmpB"/>
    <property type="match status" value="1"/>
</dbReference>
<dbReference type="SUPFAM" id="SSF74982">
    <property type="entry name" value="Small protein B (SmpB)"/>
    <property type="match status" value="1"/>
</dbReference>
<dbReference type="PROSITE" id="PS01317">
    <property type="entry name" value="SSRP"/>
    <property type="match status" value="1"/>
</dbReference>
<protein>
    <recommendedName>
        <fullName evidence="1">SsrA-binding protein</fullName>
    </recommendedName>
    <alternativeName>
        <fullName evidence="1">Small protein B</fullName>
    </alternativeName>
</protein>
<name>SSRP_ACAM1</name>
<evidence type="ECO:0000255" key="1">
    <source>
        <dbReference type="HAMAP-Rule" id="MF_00023"/>
    </source>
</evidence>
<evidence type="ECO:0000256" key="2">
    <source>
        <dbReference type="SAM" id="MobiDB-lite"/>
    </source>
</evidence>
<organism>
    <name type="scientific">Acaryochloris marina (strain MBIC 11017)</name>
    <dbReference type="NCBI Taxonomy" id="329726"/>
    <lineage>
        <taxon>Bacteria</taxon>
        <taxon>Bacillati</taxon>
        <taxon>Cyanobacteriota</taxon>
        <taxon>Cyanophyceae</taxon>
        <taxon>Acaryochloridales</taxon>
        <taxon>Acaryochloridaceae</taxon>
        <taxon>Acaryochloris</taxon>
    </lineage>
</organism>
<proteinExistence type="inferred from homology"/>
<comment type="function">
    <text evidence="1">Required for rescue of stalled ribosomes mediated by trans-translation. Binds to transfer-messenger RNA (tmRNA), required for stable association of tmRNA with ribosomes. tmRNA and SmpB together mimic tRNA shape, replacing the anticodon stem-loop with SmpB. tmRNA is encoded by the ssrA gene; the 2 termini fold to resemble tRNA(Ala) and it encodes a 'tag peptide', a short internal open reading frame. During trans-translation Ala-aminoacylated tmRNA acts like a tRNA, entering the A-site of stalled ribosomes, displacing the stalled mRNA. The ribosome then switches to translate the ORF on the tmRNA; the nascent peptide is terminated with the 'tag peptide' encoded by the tmRNA and targeted for degradation. The ribosome is freed to recommence translation, which seems to be the essential function of trans-translation.</text>
</comment>
<comment type="subcellular location">
    <subcellularLocation>
        <location evidence="1">Cytoplasm</location>
    </subcellularLocation>
    <text evidence="1">The tmRNA-SmpB complex associates with stalled 70S ribosomes.</text>
</comment>
<comment type="similarity">
    <text evidence="1">Belongs to the SmpB family.</text>
</comment>